<sequence>MRRAEVARLIDHTLLAPAATDEEVLALCAEAARLGVGAVCVAPTHVYLAAASTYRSSHEAEPAFAVASVIGFPHGTHLTVIKAEEARRAVADGATEIDMVIDIANALDENWRAIETEISEVRLSVPPHVILKVILETALLPDANIIAACRAAEAGGAEFVKTSTGFHPAGGASVRAVRAMAEAVGGRLGIKASGGIRTAEKAKDMLEAGATRLGLSASADVLAGFPA</sequence>
<organism>
    <name type="scientific">Frankia alni (strain DSM 45986 / CECT 9034 / ACN14a)</name>
    <dbReference type="NCBI Taxonomy" id="326424"/>
    <lineage>
        <taxon>Bacteria</taxon>
        <taxon>Bacillati</taxon>
        <taxon>Actinomycetota</taxon>
        <taxon>Actinomycetes</taxon>
        <taxon>Frankiales</taxon>
        <taxon>Frankiaceae</taxon>
        <taxon>Frankia</taxon>
    </lineage>
</organism>
<accession>Q0RRG0</accession>
<protein>
    <recommendedName>
        <fullName evidence="1">Deoxyribose-phosphate aldolase</fullName>
        <shortName evidence="1">DERA</shortName>
        <ecNumber evidence="1">4.1.2.4</ecNumber>
    </recommendedName>
    <alternativeName>
        <fullName evidence="1">2-deoxy-D-ribose 5-phosphate aldolase</fullName>
    </alternativeName>
    <alternativeName>
        <fullName evidence="1">Phosphodeoxyriboaldolase</fullName>
        <shortName evidence="1">Deoxyriboaldolase</shortName>
    </alternativeName>
</protein>
<dbReference type="EC" id="4.1.2.4" evidence="1"/>
<dbReference type="EMBL" id="CT573213">
    <property type="protein sequence ID" value="CAJ59859.1"/>
    <property type="molecule type" value="Genomic_DNA"/>
</dbReference>
<dbReference type="SMR" id="Q0RRG0"/>
<dbReference type="STRING" id="326424.FRAAL1197"/>
<dbReference type="KEGG" id="fal:FRAAL1197"/>
<dbReference type="eggNOG" id="COG0274">
    <property type="taxonomic scope" value="Bacteria"/>
</dbReference>
<dbReference type="HOGENOM" id="CLU_053595_0_0_11"/>
<dbReference type="UniPathway" id="UPA00002">
    <property type="reaction ID" value="UER00468"/>
</dbReference>
<dbReference type="Proteomes" id="UP000000657">
    <property type="component" value="Chromosome"/>
</dbReference>
<dbReference type="GO" id="GO:0005737">
    <property type="term" value="C:cytoplasm"/>
    <property type="evidence" value="ECO:0007669"/>
    <property type="project" value="UniProtKB-SubCell"/>
</dbReference>
<dbReference type="GO" id="GO:0004139">
    <property type="term" value="F:deoxyribose-phosphate aldolase activity"/>
    <property type="evidence" value="ECO:0007669"/>
    <property type="project" value="UniProtKB-UniRule"/>
</dbReference>
<dbReference type="GO" id="GO:0006018">
    <property type="term" value="P:2-deoxyribose 1-phosphate catabolic process"/>
    <property type="evidence" value="ECO:0007669"/>
    <property type="project" value="UniProtKB-UniRule"/>
</dbReference>
<dbReference type="GO" id="GO:0016052">
    <property type="term" value="P:carbohydrate catabolic process"/>
    <property type="evidence" value="ECO:0007669"/>
    <property type="project" value="TreeGrafter"/>
</dbReference>
<dbReference type="GO" id="GO:0009264">
    <property type="term" value="P:deoxyribonucleotide catabolic process"/>
    <property type="evidence" value="ECO:0007669"/>
    <property type="project" value="InterPro"/>
</dbReference>
<dbReference type="CDD" id="cd00959">
    <property type="entry name" value="DeoC"/>
    <property type="match status" value="1"/>
</dbReference>
<dbReference type="FunFam" id="3.20.20.70:FF:000044">
    <property type="entry name" value="Deoxyribose-phosphate aldolase"/>
    <property type="match status" value="1"/>
</dbReference>
<dbReference type="Gene3D" id="3.20.20.70">
    <property type="entry name" value="Aldolase class I"/>
    <property type="match status" value="1"/>
</dbReference>
<dbReference type="HAMAP" id="MF_00114">
    <property type="entry name" value="DeoC_type1"/>
    <property type="match status" value="1"/>
</dbReference>
<dbReference type="InterPro" id="IPR013785">
    <property type="entry name" value="Aldolase_TIM"/>
</dbReference>
<dbReference type="InterPro" id="IPR011343">
    <property type="entry name" value="DeoC"/>
</dbReference>
<dbReference type="InterPro" id="IPR002915">
    <property type="entry name" value="DeoC/FbaB/LacD_aldolase"/>
</dbReference>
<dbReference type="InterPro" id="IPR028581">
    <property type="entry name" value="DeoC_typeI"/>
</dbReference>
<dbReference type="NCBIfam" id="TIGR00126">
    <property type="entry name" value="deoC"/>
    <property type="match status" value="1"/>
</dbReference>
<dbReference type="PANTHER" id="PTHR10889">
    <property type="entry name" value="DEOXYRIBOSE-PHOSPHATE ALDOLASE"/>
    <property type="match status" value="1"/>
</dbReference>
<dbReference type="PANTHER" id="PTHR10889:SF1">
    <property type="entry name" value="DEOXYRIBOSE-PHOSPHATE ALDOLASE"/>
    <property type="match status" value="1"/>
</dbReference>
<dbReference type="Pfam" id="PF01791">
    <property type="entry name" value="DeoC"/>
    <property type="match status" value="1"/>
</dbReference>
<dbReference type="PIRSF" id="PIRSF001357">
    <property type="entry name" value="DeoC"/>
    <property type="match status" value="1"/>
</dbReference>
<dbReference type="SMART" id="SM01133">
    <property type="entry name" value="DeoC"/>
    <property type="match status" value="1"/>
</dbReference>
<dbReference type="SUPFAM" id="SSF51569">
    <property type="entry name" value="Aldolase"/>
    <property type="match status" value="1"/>
</dbReference>
<reference key="1">
    <citation type="journal article" date="2007" name="Genome Res.">
        <title>Genome characteristics of facultatively symbiotic Frankia sp. strains reflect host range and host plant biogeography.</title>
        <authorList>
            <person name="Normand P."/>
            <person name="Lapierre P."/>
            <person name="Tisa L.S."/>
            <person name="Gogarten J.P."/>
            <person name="Alloisio N."/>
            <person name="Bagnarol E."/>
            <person name="Bassi C.A."/>
            <person name="Berry A.M."/>
            <person name="Bickhart D.M."/>
            <person name="Choisne N."/>
            <person name="Couloux A."/>
            <person name="Cournoyer B."/>
            <person name="Cruveiller S."/>
            <person name="Daubin V."/>
            <person name="Demange N."/>
            <person name="Francino M.P."/>
            <person name="Goltsman E."/>
            <person name="Huang Y."/>
            <person name="Kopp O.R."/>
            <person name="Labarre L."/>
            <person name="Lapidus A."/>
            <person name="Lavire C."/>
            <person name="Marechal J."/>
            <person name="Martinez M."/>
            <person name="Mastronunzio J.E."/>
            <person name="Mullin B.C."/>
            <person name="Niemann J."/>
            <person name="Pujic P."/>
            <person name="Rawnsley T."/>
            <person name="Rouy Z."/>
            <person name="Schenowitz C."/>
            <person name="Sellstedt A."/>
            <person name="Tavares F."/>
            <person name="Tomkins J.P."/>
            <person name="Vallenet D."/>
            <person name="Valverde C."/>
            <person name="Wall L.G."/>
            <person name="Wang Y."/>
            <person name="Medigue C."/>
            <person name="Benson D.R."/>
        </authorList>
    </citation>
    <scope>NUCLEOTIDE SEQUENCE [LARGE SCALE GENOMIC DNA]</scope>
    <source>
        <strain>DSM 45986 / CECT 9034 / ACN14a</strain>
    </source>
</reference>
<proteinExistence type="inferred from homology"/>
<comment type="function">
    <text evidence="1">Catalyzes a reversible aldol reaction between acetaldehyde and D-glyceraldehyde 3-phosphate to generate 2-deoxy-D-ribose 5-phosphate.</text>
</comment>
<comment type="catalytic activity">
    <reaction evidence="1">
        <text>2-deoxy-D-ribose 5-phosphate = D-glyceraldehyde 3-phosphate + acetaldehyde</text>
        <dbReference type="Rhea" id="RHEA:12821"/>
        <dbReference type="ChEBI" id="CHEBI:15343"/>
        <dbReference type="ChEBI" id="CHEBI:59776"/>
        <dbReference type="ChEBI" id="CHEBI:62877"/>
        <dbReference type="EC" id="4.1.2.4"/>
    </reaction>
</comment>
<comment type="pathway">
    <text evidence="1">Carbohydrate degradation; 2-deoxy-D-ribose 1-phosphate degradation; D-glyceraldehyde 3-phosphate and acetaldehyde from 2-deoxy-alpha-D-ribose 1-phosphate: step 2/2.</text>
</comment>
<comment type="subcellular location">
    <subcellularLocation>
        <location evidence="1">Cytoplasm</location>
    </subcellularLocation>
</comment>
<comment type="similarity">
    <text evidence="1">Belongs to the DeoC/FbaB aldolase family. DeoC type 1 subfamily.</text>
</comment>
<evidence type="ECO:0000255" key="1">
    <source>
        <dbReference type="HAMAP-Rule" id="MF_00114"/>
    </source>
</evidence>
<gene>
    <name evidence="1" type="primary">deoC</name>
    <name type="ordered locus">FRAAL1197</name>
</gene>
<feature type="chain" id="PRO_1000117545" description="Deoxyribose-phosphate aldolase">
    <location>
        <begin position="1"/>
        <end position="227"/>
    </location>
</feature>
<feature type="active site" description="Proton donor/acceptor" evidence="1">
    <location>
        <position position="98"/>
    </location>
</feature>
<feature type="active site" description="Schiff-base intermediate with acetaldehyde" evidence="1">
    <location>
        <position position="161"/>
    </location>
</feature>
<feature type="active site" description="Proton donor/acceptor" evidence="1">
    <location>
        <position position="191"/>
    </location>
</feature>
<keyword id="KW-0963">Cytoplasm</keyword>
<keyword id="KW-0456">Lyase</keyword>
<keyword id="KW-1185">Reference proteome</keyword>
<keyword id="KW-0704">Schiff base</keyword>
<name>DEOC_FRAAA</name>